<comment type="function">
    <text evidence="2">Catalyzes the reversible phosphorolytic breakdown of the N-glycosidic bond in the beta-(deoxy)ribonucleoside molecules, with the formation of the corresponding free purine bases and pentose-1-phosphate.</text>
</comment>
<comment type="catalytic activity">
    <reaction evidence="2">
        <text>a purine D-ribonucleoside + phosphate = a purine nucleobase + alpha-D-ribose 1-phosphate</text>
        <dbReference type="Rhea" id="RHEA:19805"/>
        <dbReference type="ChEBI" id="CHEBI:26386"/>
        <dbReference type="ChEBI" id="CHEBI:43474"/>
        <dbReference type="ChEBI" id="CHEBI:57720"/>
        <dbReference type="ChEBI" id="CHEBI:142355"/>
        <dbReference type="EC" id="2.4.2.1"/>
    </reaction>
</comment>
<comment type="catalytic activity">
    <reaction evidence="2">
        <text>a purine 2'-deoxy-D-ribonucleoside + phosphate = a purine nucleobase + 2-deoxy-alpha-D-ribose 1-phosphate</text>
        <dbReference type="Rhea" id="RHEA:36431"/>
        <dbReference type="ChEBI" id="CHEBI:26386"/>
        <dbReference type="ChEBI" id="CHEBI:43474"/>
        <dbReference type="ChEBI" id="CHEBI:57259"/>
        <dbReference type="ChEBI" id="CHEBI:142361"/>
        <dbReference type="EC" id="2.4.2.1"/>
    </reaction>
</comment>
<comment type="subunit">
    <text evidence="2">Homohexamer; trimer of homodimers.</text>
</comment>
<comment type="similarity">
    <text evidence="2">Belongs to the PNP/UDP phosphorylase family.</text>
</comment>
<organism>
    <name type="scientific">Listeria monocytogenes serovar 1/2a (strain ATCC BAA-679 / EGD-e)</name>
    <dbReference type="NCBI Taxonomy" id="169963"/>
    <lineage>
        <taxon>Bacteria</taxon>
        <taxon>Bacillati</taxon>
        <taxon>Bacillota</taxon>
        <taxon>Bacilli</taxon>
        <taxon>Bacillales</taxon>
        <taxon>Listeriaceae</taxon>
        <taxon>Listeria</taxon>
    </lineage>
</organism>
<name>DEOD_LISMO</name>
<reference key="1">
    <citation type="journal article" date="2001" name="Science">
        <title>Comparative genomics of Listeria species.</title>
        <authorList>
            <person name="Glaser P."/>
            <person name="Frangeul L."/>
            <person name="Buchrieser C."/>
            <person name="Rusniok C."/>
            <person name="Amend A."/>
            <person name="Baquero F."/>
            <person name="Berche P."/>
            <person name="Bloecker H."/>
            <person name="Brandt P."/>
            <person name="Chakraborty T."/>
            <person name="Charbit A."/>
            <person name="Chetouani F."/>
            <person name="Couve E."/>
            <person name="de Daruvar A."/>
            <person name="Dehoux P."/>
            <person name="Domann E."/>
            <person name="Dominguez-Bernal G."/>
            <person name="Duchaud E."/>
            <person name="Durant L."/>
            <person name="Dussurget O."/>
            <person name="Entian K.-D."/>
            <person name="Fsihi H."/>
            <person name="Garcia-del Portillo F."/>
            <person name="Garrido P."/>
            <person name="Gautier L."/>
            <person name="Goebel W."/>
            <person name="Gomez-Lopez N."/>
            <person name="Hain T."/>
            <person name="Hauf J."/>
            <person name="Jackson D."/>
            <person name="Jones L.-M."/>
            <person name="Kaerst U."/>
            <person name="Kreft J."/>
            <person name="Kuhn M."/>
            <person name="Kunst F."/>
            <person name="Kurapkat G."/>
            <person name="Madueno E."/>
            <person name="Maitournam A."/>
            <person name="Mata Vicente J."/>
            <person name="Ng E."/>
            <person name="Nedjari H."/>
            <person name="Nordsiek G."/>
            <person name="Novella S."/>
            <person name="de Pablos B."/>
            <person name="Perez-Diaz J.-C."/>
            <person name="Purcell R."/>
            <person name="Remmel B."/>
            <person name="Rose M."/>
            <person name="Schlueter T."/>
            <person name="Simoes N."/>
            <person name="Tierrez A."/>
            <person name="Vazquez-Boland J.-A."/>
            <person name="Voss H."/>
            <person name="Wehland J."/>
            <person name="Cossart P."/>
        </authorList>
    </citation>
    <scope>NUCLEOTIDE SEQUENCE [LARGE SCALE GENOMIC DNA]</scope>
    <source>
        <strain>ATCC BAA-679 / EGD-e</strain>
    </source>
</reference>
<sequence length="233" mass="25357">MSVHIEAKQGEIAETILLPGDPLRAKYIAETFLEDVVLFNQVRGMLGFTGTYKGEKVSVMGTGMGIPSISIYVNELIQSYDVKNLIRVGTMGGIQADVKVRDVVIAQAASTDSQINRNTFAGVDFAPVADFSLLKKAYDAGIEKGLSLKVGNVFSADRFYNDQLDKQQLADYGVLGIEMEAAALYTLAQKYGRRALAILTVSDHIFTGEETSAEERQTTFNDMIVVALEAAIK</sequence>
<evidence type="ECO:0000250" key="1">
    <source>
        <dbReference type="UniProtKB" id="P50389"/>
    </source>
</evidence>
<evidence type="ECO:0000255" key="2">
    <source>
        <dbReference type="HAMAP-Rule" id="MF_01627"/>
    </source>
</evidence>
<keyword id="KW-0328">Glycosyltransferase</keyword>
<keyword id="KW-1185">Reference proteome</keyword>
<keyword id="KW-0808">Transferase</keyword>
<gene>
    <name evidence="2" type="primary">deoD</name>
    <name type="ordered locus">lmo1856</name>
</gene>
<proteinExistence type="inferred from homology"/>
<protein>
    <recommendedName>
        <fullName evidence="2">Purine nucleoside phosphorylase DeoD-type</fullName>
        <shortName evidence="2">PNP</shortName>
        <ecNumber evidence="2">2.4.2.1</ecNumber>
    </recommendedName>
</protein>
<dbReference type="EC" id="2.4.2.1" evidence="2"/>
<dbReference type="EMBL" id="AL591981">
    <property type="protein sequence ID" value="CAC99934.1"/>
    <property type="molecule type" value="Genomic_DNA"/>
</dbReference>
<dbReference type="PIR" id="AH1306">
    <property type="entry name" value="AH1306"/>
</dbReference>
<dbReference type="RefSeq" id="NP_465381.1">
    <property type="nucleotide sequence ID" value="NC_003210.1"/>
</dbReference>
<dbReference type="RefSeq" id="WP_003723411.1">
    <property type="nucleotide sequence ID" value="NZ_CP149495.1"/>
</dbReference>
<dbReference type="SMR" id="Q8Y644"/>
<dbReference type="STRING" id="169963.gene:17594541"/>
<dbReference type="PaxDb" id="169963-lmo1856"/>
<dbReference type="EnsemblBacteria" id="CAC99934">
    <property type="protein sequence ID" value="CAC99934"/>
    <property type="gene ID" value="CAC99934"/>
</dbReference>
<dbReference type="GeneID" id="87010957"/>
<dbReference type="GeneID" id="985839"/>
<dbReference type="KEGG" id="lmo:lmo1856"/>
<dbReference type="PATRIC" id="fig|169963.11.peg.1901"/>
<dbReference type="eggNOG" id="COG0813">
    <property type="taxonomic scope" value="Bacteria"/>
</dbReference>
<dbReference type="HOGENOM" id="CLU_068457_2_0_9"/>
<dbReference type="OrthoDB" id="9782889at2"/>
<dbReference type="PhylomeDB" id="Q8Y644"/>
<dbReference type="BioCyc" id="LMON169963:LMO1856-MONOMER"/>
<dbReference type="Proteomes" id="UP000000817">
    <property type="component" value="Chromosome"/>
</dbReference>
<dbReference type="GO" id="GO:0005829">
    <property type="term" value="C:cytosol"/>
    <property type="evidence" value="ECO:0000318"/>
    <property type="project" value="GO_Central"/>
</dbReference>
<dbReference type="GO" id="GO:0004731">
    <property type="term" value="F:purine-nucleoside phosphorylase activity"/>
    <property type="evidence" value="ECO:0000318"/>
    <property type="project" value="GO_Central"/>
</dbReference>
<dbReference type="GO" id="GO:0006152">
    <property type="term" value="P:purine nucleoside catabolic process"/>
    <property type="evidence" value="ECO:0000318"/>
    <property type="project" value="GO_Central"/>
</dbReference>
<dbReference type="CDD" id="cd09006">
    <property type="entry name" value="PNP_EcPNPI-like"/>
    <property type="match status" value="1"/>
</dbReference>
<dbReference type="Gene3D" id="3.40.50.1580">
    <property type="entry name" value="Nucleoside phosphorylase domain"/>
    <property type="match status" value="1"/>
</dbReference>
<dbReference type="HAMAP" id="MF_01627">
    <property type="entry name" value="Pur_nucleosid_phosp"/>
    <property type="match status" value="1"/>
</dbReference>
<dbReference type="InterPro" id="IPR004402">
    <property type="entry name" value="DeoD-type"/>
</dbReference>
<dbReference type="InterPro" id="IPR018016">
    <property type="entry name" value="Nucleoside_phosphorylase_CS"/>
</dbReference>
<dbReference type="InterPro" id="IPR000845">
    <property type="entry name" value="Nucleoside_phosphorylase_d"/>
</dbReference>
<dbReference type="InterPro" id="IPR035994">
    <property type="entry name" value="Nucleoside_phosphorylase_sf"/>
</dbReference>
<dbReference type="NCBIfam" id="TIGR00107">
    <property type="entry name" value="deoD"/>
    <property type="match status" value="1"/>
</dbReference>
<dbReference type="NCBIfam" id="NF004489">
    <property type="entry name" value="PRK05819.1"/>
    <property type="match status" value="1"/>
</dbReference>
<dbReference type="NCBIfam" id="NF009914">
    <property type="entry name" value="PRK13374.1"/>
    <property type="match status" value="1"/>
</dbReference>
<dbReference type="PANTHER" id="PTHR43691:SF11">
    <property type="entry name" value="FI09636P-RELATED"/>
    <property type="match status" value="1"/>
</dbReference>
<dbReference type="PANTHER" id="PTHR43691">
    <property type="entry name" value="URIDINE PHOSPHORYLASE"/>
    <property type="match status" value="1"/>
</dbReference>
<dbReference type="Pfam" id="PF01048">
    <property type="entry name" value="PNP_UDP_1"/>
    <property type="match status" value="1"/>
</dbReference>
<dbReference type="SUPFAM" id="SSF53167">
    <property type="entry name" value="Purine and uridine phosphorylases"/>
    <property type="match status" value="1"/>
</dbReference>
<dbReference type="PROSITE" id="PS01232">
    <property type="entry name" value="PNP_UDP_1"/>
    <property type="match status" value="1"/>
</dbReference>
<feature type="chain" id="PRO_0000063143" description="Purine nucleoside phosphorylase DeoD-type">
    <location>
        <begin position="1"/>
        <end position="233"/>
    </location>
</feature>
<feature type="active site" description="Proton donor" evidence="2">
    <location>
        <position position="203"/>
    </location>
</feature>
<feature type="binding site" evidence="1">
    <location>
        <position position="4"/>
    </location>
    <ligand>
        <name>a purine D-ribonucleoside</name>
        <dbReference type="ChEBI" id="CHEBI:142355"/>
        <note>ligand shared between dimeric partners</note>
    </ligand>
</feature>
<feature type="binding site" description="in other chain" evidence="1">
    <location>
        <position position="20"/>
    </location>
    <ligand>
        <name>phosphate</name>
        <dbReference type="ChEBI" id="CHEBI:43474"/>
        <note>ligand shared between dimeric partners</note>
    </ligand>
</feature>
<feature type="binding site" description="in other chain" evidence="1">
    <location>
        <position position="24"/>
    </location>
    <ligand>
        <name>phosphate</name>
        <dbReference type="ChEBI" id="CHEBI:43474"/>
        <note>ligand shared between dimeric partners</note>
    </ligand>
</feature>
<feature type="binding site" evidence="1">
    <location>
        <position position="43"/>
    </location>
    <ligand>
        <name>phosphate</name>
        <dbReference type="ChEBI" id="CHEBI:43474"/>
        <note>ligand shared between dimeric partners</note>
    </ligand>
</feature>
<feature type="binding site" description="in other chain" evidence="1">
    <location>
        <begin position="87"/>
        <end position="90"/>
    </location>
    <ligand>
        <name>phosphate</name>
        <dbReference type="ChEBI" id="CHEBI:43474"/>
        <note>ligand shared between dimeric partners</note>
    </ligand>
</feature>
<feature type="binding site" description="in other chain" evidence="1">
    <location>
        <begin position="178"/>
        <end position="180"/>
    </location>
    <ligand>
        <name>a purine D-ribonucleoside</name>
        <dbReference type="ChEBI" id="CHEBI:142355"/>
        <note>ligand shared between dimeric partners</note>
    </ligand>
</feature>
<feature type="binding site" description="in other chain" evidence="1">
    <location>
        <begin position="202"/>
        <end position="203"/>
    </location>
    <ligand>
        <name>a purine D-ribonucleoside</name>
        <dbReference type="ChEBI" id="CHEBI:142355"/>
        <note>ligand shared between dimeric partners</note>
    </ligand>
</feature>
<feature type="site" description="Important for catalytic activity" evidence="2">
    <location>
        <position position="216"/>
    </location>
</feature>
<accession>Q8Y644</accession>